<organism>
    <name type="scientific">Clostridium botulinum (strain 657 / Type Ba4)</name>
    <dbReference type="NCBI Taxonomy" id="515621"/>
    <lineage>
        <taxon>Bacteria</taxon>
        <taxon>Bacillati</taxon>
        <taxon>Bacillota</taxon>
        <taxon>Clostridia</taxon>
        <taxon>Eubacteriales</taxon>
        <taxon>Clostridiaceae</taxon>
        <taxon>Clostridium</taxon>
    </lineage>
</organism>
<evidence type="ECO:0000255" key="1">
    <source>
        <dbReference type="HAMAP-Rule" id="MF_00048"/>
    </source>
</evidence>
<name>Y2665_CLOB6</name>
<protein>
    <recommendedName>
        <fullName evidence="1">UPF0102 protein CLJ_B2665</fullName>
    </recommendedName>
</protein>
<dbReference type="EMBL" id="CP001083">
    <property type="protein sequence ID" value="ACQ53821.1"/>
    <property type="molecule type" value="Genomic_DNA"/>
</dbReference>
<dbReference type="RefSeq" id="WP_003362582.1">
    <property type="nucleotide sequence ID" value="NC_012658.1"/>
</dbReference>
<dbReference type="SMR" id="C3L0D8"/>
<dbReference type="KEGG" id="cbi:CLJ_B2665"/>
<dbReference type="HOGENOM" id="CLU_115353_3_1_9"/>
<dbReference type="Proteomes" id="UP000002333">
    <property type="component" value="Chromosome"/>
</dbReference>
<dbReference type="GO" id="GO:0003676">
    <property type="term" value="F:nucleic acid binding"/>
    <property type="evidence" value="ECO:0007669"/>
    <property type="project" value="InterPro"/>
</dbReference>
<dbReference type="CDD" id="cd20736">
    <property type="entry name" value="PoNe_Nuclease"/>
    <property type="match status" value="1"/>
</dbReference>
<dbReference type="Gene3D" id="3.40.1350.10">
    <property type="match status" value="1"/>
</dbReference>
<dbReference type="HAMAP" id="MF_00048">
    <property type="entry name" value="UPF0102"/>
    <property type="match status" value="1"/>
</dbReference>
<dbReference type="InterPro" id="IPR011335">
    <property type="entry name" value="Restrct_endonuc-II-like"/>
</dbReference>
<dbReference type="InterPro" id="IPR011856">
    <property type="entry name" value="tRNA_endonuc-like_dom_sf"/>
</dbReference>
<dbReference type="InterPro" id="IPR003509">
    <property type="entry name" value="UPF0102_YraN-like"/>
</dbReference>
<dbReference type="NCBIfam" id="NF009150">
    <property type="entry name" value="PRK12497.1-3"/>
    <property type="match status" value="1"/>
</dbReference>
<dbReference type="NCBIfam" id="NF009154">
    <property type="entry name" value="PRK12497.3-3"/>
    <property type="match status" value="1"/>
</dbReference>
<dbReference type="NCBIfam" id="TIGR00252">
    <property type="entry name" value="YraN family protein"/>
    <property type="match status" value="1"/>
</dbReference>
<dbReference type="PANTHER" id="PTHR34039">
    <property type="entry name" value="UPF0102 PROTEIN YRAN"/>
    <property type="match status" value="1"/>
</dbReference>
<dbReference type="PANTHER" id="PTHR34039:SF1">
    <property type="entry name" value="UPF0102 PROTEIN YRAN"/>
    <property type="match status" value="1"/>
</dbReference>
<dbReference type="Pfam" id="PF02021">
    <property type="entry name" value="UPF0102"/>
    <property type="match status" value="1"/>
</dbReference>
<dbReference type="SUPFAM" id="SSF52980">
    <property type="entry name" value="Restriction endonuclease-like"/>
    <property type="match status" value="1"/>
</dbReference>
<gene>
    <name type="ordered locus">CLJ_B2665</name>
</gene>
<sequence length="123" mass="14467">MHYCNKDIGSFGETIAADYIKNSGYIILERNFRCKLGEIDIIAKDKNFIVFIEVKTRYGYIYGSPSEAINFRKQNKIYKTAQLYIIKKAIHNKFYFRFDVIEVILNTLNSNYSIKLIKNAFQI</sequence>
<accession>C3L0D8</accession>
<comment type="similarity">
    <text evidence="1">Belongs to the UPF0102 family.</text>
</comment>
<feature type="chain" id="PRO_1000202210" description="UPF0102 protein CLJ_B2665">
    <location>
        <begin position="1"/>
        <end position="123"/>
    </location>
</feature>
<reference key="1">
    <citation type="submission" date="2008-05" db="EMBL/GenBank/DDBJ databases">
        <title>Genome sequence of Clostridium botulinum Ba4 strain 657.</title>
        <authorList>
            <person name="Shrivastava S."/>
            <person name="Brown J.L."/>
            <person name="Bruce D."/>
            <person name="Detter C."/>
            <person name="Munk C."/>
            <person name="Smith L.A."/>
            <person name="Smith T.J."/>
            <person name="Sutton G."/>
            <person name="Brettin T.S."/>
        </authorList>
    </citation>
    <scope>NUCLEOTIDE SEQUENCE [LARGE SCALE GENOMIC DNA]</scope>
    <source>
        <strain>657 / Type Ba4</strain>
    </source>
</reference>
<proteinExistence type="inferred from homology"/>